<keyword id="KW-0507">mRNA processing</keyword>
<keyword id="KW-0539">Nucleus</keyword>
<keyword id="KW-0597">Phosphoprotein</keyword>
<keyword id="KW-1185">Reference proteome</keyword>
<keyword id="KW-0694">RNA-binding</keyword>
<accession>Q9VSH4</accession>
<accession>Q95TS9</accession>
<reference key="1">
    <citation type="journal article" date="2000" name="Science">
        <title>The genome sequence of Drosophila melanogaster.</title>
        <authorList>
            <person name="Adams M.D."/>
            <person name="Celniker S.E."/>
            <person name="Holt R.A."/>
            <person name="Evans C.A."/>
            <person name="Gocayne J.D."/>
            <person name="Amanatides P.G."/>
            <person name="Scherer S.E."/>
            <person name="Li P.W."/>
            <person name="Hoskins R.A."/>
            <person name="Galle R.F."/>
            <person name="George R.A."/>
            <person name="Lewis S.E."/>
            <person name="Richards S."/>
            <person name="Ashburner M."/>
            <person name="Henderson S.N."/>
            <person name="Sutton G.G."/>
            <person name="Wortman J.R."/>
            <person name="Yandell M.D."/>
            <person name="Zhang Q."/>
            <person name="Chen L.X."/>
            <person name="Brandon R.C."/>
            <person name="Rogers Y.-H.C."/>
            <person name="Blazej R.G."/>
            <person name="Champe M."/>
            <person name="Pfeiffer B.D."/>
            <person name="Wan K.H."/>
            <person name="Doyle C."/>
            <person name="Baxter E.G."/>
            <person name="Helt G."/>
            <person name="Nelson C.R."/>
            <person name="Miklos G.L.G."/>
            <person name="Abril J.F."/>
            <person name="Agbayani A."/>
            <person name="An H.-J."/>
            <person name="Andrews-Pfannkoch C."/>
            <person name="Baldwin D."/>
            <person name="Ballew R.M."/>
            <person name="Basu A."/>
            <person name="Baxendale J."/>
            <person name="Bayraktaroglu L."/>
            <person name="Beasley E.M."/>
            <person name="Beeson K.Y."/>
            <person name="Benos P.V."/>
            <person name="Berman B.P."/>
            <person name="Bhandari D."/>
            <person name="Bolshakov S."/>
            <person name="Borkova D."/>
            <person name="Botchan M.R."/>
            <person name="Bouck J."/>
            <person name="Brokstein P."/>
            <person name="Brottier P."/>
            <person name="Burtis K.C."/>
            <person name="Busam D.A."/>
            <person name="Butler H."/>
            <person name="Cadieu E."/>
            <person name="Center A."/>
            <person name="Chandra I."/>
            <person name="Cherry J.M."/>
            <person name="Cawley S."/>
            <person name="Dahlke C."/>
            <person name="Davenport L.B."/>
            <person name="Davies P."/>
            <person name="de Pablos B."/>
            <person name="Delcher A."/>
            <person name="Deng Z."/>
            <person name="Mays A.D."/>
            <person name="Dew I."/>
            <person name="Dietz S.M."/>
            <person name="Dodson K."/>
            <person name="Doup L.E."/>
            <person name="Downes M."/>
            <person name="Dugan-Rocha S."/>
            <person name="Dunkov B.C."/>
            <person name="Dunn P."/>
            <person name="Durbin K.J."/>
            <person name="Evangelista C.C."/>
            <person name="Ferraz C."/>
            <person name="Ferriera S."/>
            <person name="Fleischmann W."/>
            <person name="Fosler C."/>
            <person name="Gabrielian A.E."/>
            <person name="Garg N.S."/>
            <person name="Gelbart W.M."/>
            <person name="Glasser K."/>
            <person name="Glodek A."/>
            <person name="Gong F."/>
            <person name="Gorrell J.H."/>
            <person name="Gu Z."/>
            <person name="Guan P."/>
            <person name="Harris M."/>
            <person name="Harris N.L."/>
            <person name="Harvey D.A."/>
            <person name="Heiman T.J."/>
            <person name="Hernandez J.R."/>
            <person name="Houck J."/>
            <person name="Hostin D."/>
            <person name="Houston K.A."/>
            <person name="Howland T.J."/>
            <person name="Wei M.-H."/>
            <person name="Ibegwam C."/>
            <person name="Jalali M."/>
            <person name="Kalush F."/>
            <person name="Karpen G.H."/>
            <person name="Ke Z."/>
            <person name="Kennison J.A."/>
            <person name="Ketchum K.A."/>
            <person name="Kimmel B.E."/>
            <person name="Kodira C.D."/>
            <person name="Kraft C.L."/>
            <person name="Kravitz S."/>
            <person name="Kulp D."/>
            <person name="Lai Z."/>
            <person name="Lasko P."/>
            <person name="Lei Y."/>
            <person name="Levitsky A.A."/>
            <person name="Li J.H."/>
            <person name="Li Z."/>
            <person name="Liang Y."/>
            <person name="Lin X."/>
            <person name="Liu X."/>
            <person name="Mattei B."/>
            <person name="McIntosh T.C."/>
            <person name="McLeod M.P."/>
            <person name="McPherson D."/>
            <person name="Merkulov G."/>
            <person name="Milshina N.V."/>
            <person name="Mobarry C."/>
            <person name="Morris J."/>
            <person name="Moshrefi A."/>
            <person name="Mount S.M."/>
            <person name="Moy M."/>
            <person name="Murphy B."/>
            <person name="Murphy L."/>
            <person name="Muzny D.M."/>
            <person name="Nelson D.L."/>
            <person name="Nelson D.R."/>
            <person name="Nelson K.A."/>
            <person name="Nixon K."/>
            <person name="Nusskern D.R."/>
            <person name="Pacleb J.M."/>
            <person name="Palazzolo M."/>
            <person name="Pittman G.S."/>
            <person name="Pan S."/>
            <person name="Pollard J."/>
            <person name="Puri V."/>
            <person name="Reese M.G."/>
            <person name="Reinert K."/>
            <person name="Remington K."/>
            <person name="Saunders R.D.C."/>
            <person name="Scheeler F."/>
            <person name="Shen H."/>
            <person name="Shue B.C."/>
            <person name="Siden-Kiamos I."/>
            <person name="Simpson M."/>
            <person name="Skupski M.P."/>
            <person name="Smith T.J."/>
            <person name="Spier E."/>
            <person name="Spradling A.C."/>
            <person name="Stapleton M."/>
            <person name="Strong R."/>
            <person name="Sun E."/>
            <person name="Svirskas R."/>
            <person name="Tector C."/>
            <person name="Turner R."/>
            <person name="Venter E."/>
            <person name="Wang A.H."/>
            <person name="Wang X."/>
            <person name="Wang Z.-Y."/>
            <person name="Wassarman D.A."/>
            <person name="Weinstock G.M."/>
            <person name="Weissenbach J."/>
            <person name="Williams S.M."/>
            <person name="Woodage T."/>
            <person name="Worley K.C."/>
            <person name="Wu D."/>
            <person name="Yang S."/>
            <person name="Yao Q.A."/>
            <person name="Ye J."/>
            <person name="Yeh R.-F."/>
            <person name="Zaveri J.S."/>
            <person name="Zhan M."/>
            <person name="Zhang G."/>
            <person name="Zhao Q."/>
            <person name="Zheng L."/>
            <person name="Zheng X.H."/>
            <person name="Zhong F.N."/>
            <person name="Zhong W."/>
            <person name="Zhou X."/>
            <person name="Zhu S.C."/>
            <person name="Zhu X."/>
            <person name="Smith H.O."/>
            <person name="Gibbs R.A."/>
            <person name="Myers E.W."/>
            <person name="Rubin G.M."/>
            <person name="Venter J.C."/>
        </authorList>
    </citation>
    <scope>NUCLEOTIDE SEQUENCE [LARGE SCALE GENOMIC DNA]</scope>
    <source>
        <strain>Berkeley</strain>
    </source>
</reference>
<reference key="2">
    <citation type="journal article" date="2002" name="Genome Biol.">
        <title>Annotation of the Drosophila melanogaster euchromatic genome: a systematic review.</title>
        <authorList>
            <person name="Misra S."/>
            <person name="Crosby M.A."/>
            <person name="Mungall C.J."/>
            <person name="Matthews B.B."/>
            <person name="Campbell K.S."/>
            <person name="Hradecky P."/>
            <person name="Huang Y."/>
            <person name="Kaminker J.S."/>
            <person name="Millburn G.H."/>
            <person name="Prochnik S.E."/>
            <person name="Smith C.D."/>
            <person name="Tupy J.L."/>
            <person name="Whitfield E.J."/>
            <person name="Bayraktaroglu L."/>
            <person name="Berman B.P."/>
            <person name="Bettencourt B.R."/>
            <person name="Celniker S.E."/>
            <person name="de Grey A.D.N.J."/>
            <person name="Drysdale R.A."/>
            <person name="Harris N.L."/>
            <person name="Richter J."/>
            <person name="Russo S."/>
            <person name="Schroeder A.J."/>
            <person name="Shu S.Q."/>
            <person name="Stapleton M."/>
            <person name="Yamada C."/>
            <person name="Ashburner M."/>
            <person name="Gelbart W.M."/>
            <person name="Rubin G.M."/>
            <person name="Lewis S.E."/>
        </authorList>
    </citation>
    <scope>GENOME REANNOTATION</scope>
    <source>
        <strain>Berkeley</strain>
    </source>
</reference>
<reference key="3">
    <citation type="journal article" date="2002" name="Genome Biol.">
        <title>A Drosophila full-length cDNA resource.</title>
        <authorList>
            <person name="Stapleton M."/>
            <person name="Carlson J.W."/>
            <person name="Brokstein P."/>
            <person name="Yu C."/>
            <person name="Champe M."/>
            <person name="George R.A."/>
            <person name="Guarin H."/>
            <person name="Kronmiller B."/>
            <person name="Pacleb J.M."/>
            <person name="Park S."/>
            <person name="Wan K.H."/>
            <person name="Rubin G.M."/>
            <person name="Celniker S.E."/>
        </authorList>
    </citation>
    <scope>NUCLEOTIDE SEQUENCE [LARGE SCALE MRNA]</scope>
    <source>
        <strain>Berkeley</strain>
        <tissue>Embryo</tissue>
    </source>
</reference>
<reference key="4">
    <citation type="journal article" date="2007" name="Mol. Biosyst.">
        <title>An integrated chemical, mass spectrometric and computational strategy for (quantitative) phosphoproteomics: application to Drosophila melanogaster Kc167 cells.</title>
        <authorList>
            <person name="Bodenmiller B."/>
            <person name="Mueller L.N."/>
            <person name="Pedrioli P.G.A."/>
            <person name="Pflieger D."/>
            <person name="Juenger M.A."/>
            <person name="Eng J.K."/>
            <person name="Aebersold R."/>
            <person name="Tao W.A."/>
        </authorList>
    </citation>
    <scope>PHOSPHORYLATION [LARGE SCALE ANALYSIS] AT SER-596</scope>
    <scope>IDENTIFICATION BY MASS SPECTROMETRY</scope>
</reference>
<organism>
    <name type="scientific">Drosophila melanogaster</name>
    <name type="common">Fruit fly</name>
    <dbReference type="NCBI Taxonomy" id="7227"/>
    <lineage>
        <taxon>Eukaryota</taxon>
        <taxon>Metazoa</taxon>
        <taxon>Ecdysozoa</taxon>
        <taxon>Arthropoda</taxon>
        <taxon>Hexapoda</taxon>
        <taxon>Insecta</taxon>
        <taxon>Pterygota</taxon>
        <taxon>Neoptera</taxon>
        <taxon>Endopterygota</taxon>
        <taxon>Diptera</taxon>
        <taxon>Brachycera</taxon>
        <taxon>Muscomorpha</taxon>
        <taxon>Ephydroidea</taxon>
        <taxon>Drosophilidae</taxon>
        <taxon>Drosophila</taxon>
        <taxon>Sophophora</taxon>
    </lineage>
</organism>
<name>CPSF6_DROME</name>
<gene>
    <name evidence="6" type="primary">Cpsf6</name>
    <name evidence="6" type="ORF">CG7185</name>
</gene>
<sequence length="652" mass="71094">MADVVLDLYAEDLDKDFAGQAQDEFGGDGVDLYDDIGGPTESAASGGGGGGTPSADGAAGPGSGEPGERNSGGPNGVYHQSSGSLTPTMNRRYQLYVGNLTWWTTDQDIANSLRDIGVSDLQEVKFFENRANGQSKGFSVISLGSESSLRAVLDQLPKKEMHGQAPVVTYPSKQALTQFESLQKTRPVPPPQQNGPPRGPAPPSMGGGPMPTGHPGGPQGGGPPGHPPRGMNSIMQPGQYRPQHMSQVPQVGGPNSGPPRMQPPMHPQGGLMGNQQPPPRYPSAQGQWPGQRPGGPRPGPPNGPPQRPMFQGGPMGMPVRGPAGPDWRRPPMHGGFPPQGPPRGLPPAPGPGGPHGAPAPHVNPAFFNQPGGPAQHPGMGGPPHGAPGPQPGMNMPPQQGMNMTPQHGPPPQFAQHGPRGPWPPPQGKPPGPFPDPQQMGPQLTEVEFEEVMSRNRTVSSSAIARAVSDAAAGEYSSAIETLVTAISLIKQSKVAHDERCKILISSLQDTLHGIEAKSYNRRERSRSRERSHRSRQRRERSTSRYRERSRERERDRDRERERDGGSYRERSRSRERERQAPDHYRDDSRSVRPRKSPEPVVAEAAEAPSSKRYYEDRERYRSSDRERRDRDRDRDRERERDRDRREEHRSRH</sequence>
<proteinExistence type="evidence at protein level"/>
<feature type="chain" id="PRO_0000372849" description="Cleavage and polyadenylation specificity factor subunit 6">
    <location>
        <begin position="1"/>
        <end position="652"/>
    </location>
</feature>
<feature type="domain" description="RRM" evidence="2">
    <location>
        <begin position="93"/>
        <end position="173"/>
    </location>
</feature>
<feature type="region of interest" description="Disordered" evidence="3">
    <location>
        <begin position="20"/>
        <end position="85"/>
    </location>
</feature>
<feature type="region of interest" description="Disordered" evidence="3">
    <location>
        <begin position="184"/>
        <end position="440"/>
    </location>
</feature>
<feature type="region of interest" description="Disordered" evidence="3">
    <location>
        <begin position="518"/>
        <end position="652"/>
    </location>
</feature>
<feature type="compositionally biased region" description="Pro residues" evidence="3">
    <location>
        <begin position="187"/>
        <end position="203"/>
    </location>
</feature>
<feature type="compositionally biased region" description="Gly residues" evidence="3">
    <location>
        <begin position="205"/>
        <end position="223"/>
    </location>
</feature>
<feature type="compositionally biased region" description="Pro residues" evidence="3">
    <location>
        <begin position="256"/>
        <end position="266"/>
    </location>
</feature>
<feature type="compositionally biased region" description="Pro residues" evidence="3">
    <location>
        <begin position="295"/>
        <end position="307"/>
    </location>
</feature>
<feature type="compositionally biased region" description="Pro residues" evidence="3">
    <location>
        <begin position="338"/>
        <end position="352"/>
    </location>
</feature>
<feature type="compositionally biased region" description="Low complexity" evidence="3">
    <location>
        <begin position="391"/>
        <end position="406"/>
    </location>
</feature>
<feature type="compositionally biased region" description="Pro residues" evidence="3">
    <location>
        <begin position="420"/>
        <end position="435"/>
    </location>
</feature>
<feature type="compositionally biased region" description="Basic and acidic residues" evidence="3">
    <location>
        <begin position="518"/>
        <end position="528"/>
    </location>
</feature>
<feature type="compositionally biased region" description="Basic residues" evidence="3">
    <location>
        <begin position="529"/>
        <end position="538"/>
    </location>
</feature>
<feature type="compositionally biased region" description="Basic and acidic residues" evidence="3">
    <location>
        <begin position="539"/>
        <end position="590"/>
    </location>
</feature>
<feature type="compositionally biased region" description="Low complexity" evidence="3">
    <location>
        <begin position="598"/>
        <end position="610"/>
    </location>
</feature>
<feature type="compositionally biased region" description="Basic and acidic residues" evidence="3">
    <location>
        <begin position="612"/>
        <end position="652"/>
    </location>
</feature>
<feature type="modified residue" description="Phosphoserine" evidence="4">
    <location>
        <position position="596"/>
    </location>
</feature>
<dbReference type="EMBL" id="AE014296">
    <property type="protein sequence ID" value="AAF50445.2"/>
    <property type="molecule type" value="Genomic_DNA"/>
</dbReference>
<dbReference type="EMBL" id="AY058563">
    <property type="protein sequence ID" value="AAL13792.1"/>
    <property type="molecule type" value="mRNA"/>
</dbReference>
<dbReference type="RefSeq" id="NP_648206.1">
    <property type="nucleotide sequence ID" value="NM_139949.3"/>
</dbReference>
<dbReference type="SMR" id="Q9VSH4"/>
<dbReference type="BioGRID" id="64355">
    <property type="interactions" value="61"/>
</dbReference>
<dbReference type="FunCoup" id="Q9VSH4">
    <property type="interactions" value="2793"/>
</dbReference>
<dbReference type="IntAct" id="Q9VSH4">
    <property type="interactions" value="81"/>
</dbReference>
<dbReference type="STRING" id="7227.FBpp0076433"/>
<dbReference type="GlyGen" id="Q9VSH4">
    <property type="glycosylation" value="1 site"/>
</dbReference>
<dbReference type="iPTMnet" id="Q9VSH4"/>
<dbReference type="PaxDb" id="7227-FBpp0076433"/>
<dbReference type="DNASU" id="38937"/>
<dbReference type="EnsemblMetazoa" id="FBtr0076710">
    <property type="protein sequence ID" value="FBpp0076433"/>
    <property type="gene ID" value="FBgn0035872"/>
</dbReference>
<dbReference type="GeneID" id="38937"/>
<dbReference type="KEGG" id="dme:Dmel_CG7185"/>
<dbReference type="UCSC" id="CG7185-RA">
    <property type="organism name" value="d. melanogaster"/>
</dbReference>
<dbReference type="AGR" id="FB:FBgn0035872"/>
<dbReference type="CTD" id="11052"/>
<dbReference type="FlyBase" id="FBgn0035872">
    <property type="gene designation" value="Cpsf6"/>
</dbReference>
<dbReference type="VEuPathDB" id="VectorBase:FBgn0035872"/>
<dbReference type="eggNOG" id="KOG4849">
    <property type="taxonomic scope" value="Eukaryota"/>
</dbReference>
<dbReference type="GeneTree" id="ENSGT00730000110905"/>
<dbReference type="InParanoid" id="Q9VSH4"/>
<dbReference type="OMA" id="CTRQNLN"/>
<dbReference type="OrthoDB" id="10065185at2759"/>
<dbReference type="PhylomeDB" id="Q9VSH4"/>
<dbReference type="Reactome" id="R-DME-72187">
    <property type="pathway name" value="mRNA 3'-end processing"/>
</dbReference>
<dbReference type="Reactome" id="R-DME-72203">
    <property type="pathway name" value="Processing of Capped Intron-Containing Pre-mRNA"/>
</dbReference>
<dbReference type="Reactome" id="R-DME-73856">
    <property type="pathway name" value="RNA Polymerase II Transcription Termination"/>
</dbReference>
<dbReference type="Reactome" id="R-DME-77595">
    <property type="pathway name" value="Processing of Intronless Pre-mRNAs"/>
</dbReference>
<dbReference type="Reactome" id="R-DME-9013422">
    <property type="pathway name" value="RHOBTB1 GTPase cycle"/>
</dbReference>
<dbReference type="SignaLink" id="Q9VSH4"/>
<dbReference type="BioGRID-ORCS" id="38937">
    <property type="hits" value="1 hit in 3 CRISPR screens"/>
</dbReference>
<dbReference type="ChiTaRS" id="CG7185">
    <property type="organism name" value="fly"/>
</dbReference>
<dbReference type="GenomeRNAi" id="38937"/>
<dbReference type="PRO" id="PR:Q9VSH4"/>
<dbReference type="Proteomes" id="UP000000803">
    <property type="component" value="Chromosome 3L"/>
</dbReference>
<dbReference type="Bgee" id="FBgn0035872">
    <property type="expression patterns" value="Expressed in spermatogonium in testis and 259 other cell types or tissues"/>
</dbReference>
<dbReference type="ExpressionAtlas" id="Q9VSH4">
    <property type="expression patterns" value="baseline and differential"/>
</dbReference>
<dbReference type="GO" id="GO:0005847">
    <property type="term" value="C:mRNA cleavage and polyadenylation specificity factor complex"/>
    <property type="evidence" value="ECO:0000318"/>
    <property type="project" value="GO_Central"/>
</dbReference>
<dbReference type="GO" id="GO:0005634">
    <property type="term" value="C:nucleus"/>
    <property type="evidence" value="ECO:0000314"/>
    <property type="project" value="FlyBase"/>
</dbReference>
<dbReference type="GO" id="GO:0003729">
    <property type="term" value="F:mRNA binding"/>
    <property type="evidence" value="ECO:0000314"/>
    <property type="project" value="FlyBase"/>
</dbReference>
<dbReference type="GO" id="GO:0110104">
    <property type="term" value="P:mRNA alternative polyadenylation"/>
    <property type="evidence" value="ECO:0000318"/>
    <property type="project" value="GO_Central"/>
</dbReference>
<dbReference type="GO" id="GO:0000381">
    <property type="term" value="P:regulation of alternative mRNA splicing, via spliceosome"/>
    <property type="evidence" value="ECO:0007001"/>
    <property type="project" value="FlyBase"/>
</dbReference>
<dbReference type="CDD" id="cd12643">
    <property type="entry name" value="RRM_CFIm68"/>
    <property type="match status" value="1"/>
</dbReference>
<dbReference type="Gene3D" id="3.30.70.330">
    <property type="match status" value="1"/>
</dbReference>
<dbReference type="InterPro" id="IPR034772">
    <property type="entry name" value="CPSF6/7"/>
</dbReference>
<dbReference type="InterPro" id="IPR034769">
    <property type="entry name" value="CPSF6_RRM"/>
</dbReference>
<dbReference type="InterPro" id="IPR012677">
    <property type="entry name" value="Nucleotide-bd_a/b_plait_sf"/>
</dbReference>
<dbReference type="InterPro" id="IPR035979">
    <property type="entry name" value="RBD_domain_sf"/>
</dbReference>
<dbReference type="InterPro" id="IPR000504">
    <property type="entry name" value="RRM_dom"/>
</dbReference>
<dbReference type="PANTHER" id="PTHR23204">
    <property type="entry name" value="CLEAVAGE AND POLYADENYLATION SPECIFIC FACTOR"/>
    <property type="match status" value="1"/>
</dbReference>
<dbReference type="Pfam" id="PF00076">
    <property type="entry name" value="RRM_1"/>
    <property type="match status" value="1"/>
</dbReference>
<dbReference type="SMART" id="SM00360">
    <property type="entry name" value="RRM"/>
    <property type="match status" value="1"/>
</dbReference>
<dbReference type="SUPFAM" id="SSF54928">
    <property type="entry name" value="RNA-binding domain, RBD"/>
    <property type="match status" value="1"/>
</dbReference>
<dbReference type="PROSITE" id="PS50102">
    <property type="entry name" value="RRM"/>
    <property type="match status" value="1"/>
</dbReference>
<protein>
    <recommendedName>
        <fullName evidence="6">Cleavage and polyadenylation specificity factor subunit 6</fullName>
    </recommendedName>
</protein>
<evidence type="ECO:0000250" key="1"/>
<evidence type="ECO:0000255" key="2">
    <source>
        <dbReference type="PROSITE-ProRule" id="PRU00176"/>
    </source>
</evidence>
<evidence type="ECO:0000256" key="3">
    <source>
        <dbReference type="SAM" id="MobiDB-lite"/>
    </source>
</evidence>
<evidence type="ECO:0000269" key="4">
    <source>
    </source>
</evidence>
<evidence type="ECO:0000305" key="5"/>
<evidence type="ECO:0000312" key="6">
    <source>
        <dbReference type="FlyBase" id="FBgn0035872"/>
    </source>
</evidence>
<comment type="function">
    <text evidence="1">May play a role in pre-mRNA 3'-processing.</text>
</comment>
<comment type="subcellular location">
    <subcellularLocation>
        <location evidence="1">Nucleus</location>
    </subcellularLocation>
</comment>
<comment type="similarity">
    <text evidence="5">Belongs to the RRM CPSF6/7 family.</text>
</comment>